<protein>
    <recommendedName>
        <fullName evidence="1">UPF0102 protein Dgeo_1894</fullName>
    </recommendedName>
</protein>
<proteinExistence type="inferred from homology"/>
<feature type="chain" id="PRO_0000336167" description="UPF0102 protein Dgeo_1894">
    <location>
        <begin position="1"/>
        <end position="113"/>
    </location>
</feature>
<dbReference type="EMBL" id="CP000359">
    <property type="protein sequence ID" value="ABF46189.1"/>
    <property type="molecule type" value="Genomic_DNA"/>
</dbReference>
<dbReference type="RefSeq" id="WP_011531016.1">
    <property type="nucleotide sequence ID" value="NC_008025.1"/>
</dbReference>
<dbReference type="SMR" id="Q1IX45"/>
<dbReference type="STRING" id="319795.Dgeo_1894"/>
<dbReference type="KEGG" id="dge:Dgeo_1894"/>
<dbReference type="eggNOG" id="COG0792">
    <property type="taxonomic scope" value="Bacteria"/>
</dbReference>
<dbReference type="HOGENOM" id="CLU_115353_1_0_0"/>
<dbReference type="Proteomes" id="UP000002431">
    <property type="component" value="Chromosome"/>
</dbReference>
<dbReference type="GO" id="GO:0003676">
    <property type="term" value="F:nucleic acid binding"/>
    <property type="evidence" value="ECO:0007669"/>
    <property type="project" value="InterPro"/>
</dbReference>
<dbReference type="Gene3D" id="3.40.1350.10">
    <property type="match status" value="1"/>
</dbReference>
<dbReference type="HAMAP" id="MF_00048">
    <property type="entry name" value="UPF0102"/>
    <property type="match status" value="1"/>
</dbReference>
<dbReference type="InterPro" id="IPR011335">
    <property type="entry name" value="Restrct_endonuc-II-like"/>
</dbReference>
<dbReference type="InterPro" id="IPR011856">
    <property type="entry name" value="tRNA_endonuc-like_dom_sf"/>
</dbReference>
<dbReference type="InterPro" id="IPR003509">
    <property type="entry name" value="UPF0102_YraN-like"/>
</dbReference>
<dbReference type="NCBIfam" id="NF009150">
    <property type="entry name" value="PRK12497.1-3"/>
    <property type="match status" value="1"/>
</dbReference>
<dbReference type="NCBIfam" id="TIGR00252">
    <property type="entry name" value="YraN family protein"/>
    <property type="match status" value="1"/>
</dbReference>
<dbReference type="PANTHER" id="PTHR34039">
    <property type="entry name" value="UPF0102 PROTEIN YRAN"/>
    <property type="match status" value="1"/>
</dbReference>
<dbReference type="PANTHER" id="PTHR34039:SF1">
    <property type="entry name" value="UPF0102 PROTEIN YRAN"/>
    <property type="match status" value="1"/>
</dbReference>
<dbReference type="Pfam" id="PF02021">
    <property type="entry name" value="UPF0102"/>
    <property type="match status" value="1"/>
</dbReference>
<dbReference type="SUPFAM" id="SSF52980">
    <property type="entry name" value="Restriction endonuclease-like"/>
    <property type="match status" value="1"/>
</dbReference>
<organism>
    <name type="scientific">Deinococcus geothermalis (strain DSM 11300 / CIP 105573 / AG-3a)</name>
    <dbReference type="NCBI Taxonomy" id="319795"/>
    <lineage>
        <taxon>Bacteria</taxon>
        <taxon>Thermotogati</taxon>
        <taxon>Deinococcota</taxon>
        <taxon>Deinococci</taxon>
        <taxon>Deinococcales</taxon>
        <taxon>Deinococcaceae</taxon>
        <taxon>Deinococcus</taxon>
    </lineage>
</organism>
<sequence>MKGADAEARAAAWLASLGREVVARNYRIPGGEIDLVSRDGDVLVFTEVRQRHSSRFGTAAESVTPRKLALMRRAALAYLSREHGREDLPCRLEVLTIDGPADRGTLTLLPLDG</sequence>
<accession>Q1IX45</accession>
<reference key="1">
    <citation type="submission" date="2006-04" db="EMBL/GenBank/DDBJ databases">
        <title>Complete sequence of chromosome of Deinococcus geothermalis DSM 11300.</title>
        <authorList>
            <person name="Copeland A."/>
            <person name="Lucas S."/>
            <person name="Lapidus A."/>
            <person name="Barry K."/>
            <person name="Detter J.C."/>
            <person name="Glavina del Rio T."/>
            <person name="Hammon N."/>
            <person name="Israni S."/>
            <person name="Dalin E."/>
            <person name="Tice H."/>
            <person name="Pitluck S."/>
            <person name="Brettin T."/>
            <person name="Bruce D."/>
            <person name="Han C."/>
            <person name="Tapia R."/>
            <person name="Saunders E."/>
            <person name="Gilna P."/>
            <person name="Schmutz J."/>
            <person name="Larimer F."/>
            <person name="Land M."/>
            <person name="Hauser L."/>
            <person name="Kyrpides N."/>
            <person name="Kim E."/>
            <person name="Daly M.J."/>
            <person name="Fredrickson J.K."/>
            <person name="Makarova K.S."/>
            <person name="Gaidamakova E.K."/>
            <person name="Zhai M."/>
            <person name="Richardson P."/>
        </authorList>
    </citation>
    <scope>NUCLEOTIDE SEQUENCE [LARGE SCALE GENOMIC DNA]</scope>
    <source>
        <strain>DSM 11300 / CIP 105573 / AG-3a</strain>
    </source>
</reference>
<name>Y1894_DEIGD</name>
<comment type="similarity">
    <text evidence="1">Belongs to the UPF0102 family.</text>
</comment>
<gene>
    <name type="ordered locus">Dgeo_1894</name>
</gene>
<evidence type="ECO:0000255" key="1">
    <source>
        <dbReference type="HAMAP-Rule" id="MF_00048"/>
    </source>
</evidence>